<reference key="1">
    <citation type="journal article" date="2009" name="PLoS ONE">
        <title>Salmonella paratyphi C: genetic divergence from Salmonella choleraesuis and pathogenic convergence with Salmonella typhi.</title>
        <authorList>
            <person name="Liu W.-Q."/>
            <person name="Feng Y."/>
            <person name="Wang Y."/>
            <person name="Zou Q.-H."/>
            <person name="Chen F."/>
            <person name="Guo J.-T."/>
            <person name="Peng Y.-H."/>
            <person name="Jin Y."/>
            <person name="Li Y.-G."/>
            <person name="Hu S.-N."/>
            <person name="Johnston R.N."/>
            <person name="Liu G.-R."/>
            <person name="Liu S.-L."/>
        </authorList>
    </citation>
    <scope>NUCLEOTIDE SEQUENCE [LARGE SCALE GENOMIC DNA]</scope>
    <source>
        <strain>RKS4594</strain>
    </source>
</reference>
<sequence>MSPSDVPINWKRNLTVTWLGCFLTGAAFSLVMPFLPLYVEQLGVTGHSALNMWSGLVFSITFLFSAIASPFWGGLADRKGRKIMLLRSALGMAIVMLLMGMAQNIWQFLILRALLGLLGGFIPNANALIATQVPRHKSGWALGTLSTGGVSGALLGPLAGGLLAGHYGLRPVFFITASVLFICFLLTFFFIRENFLPVSKKEILHVREVVASLKNPRLVLSLFVTTLIIQVATGSIAPILTLYVRELAGNVSNIAFISGMIASVPGVAALLSAPRLGKLGDRIGPEKILIVALIISVLLLIPMSFVQTPWQLALLRFLLGAADGALLPAVQTLLVYNSTNQIAGRIFSYNQSFRDIGNVTGPLMGAAISASYGFRAVFCVTAGVVLFNAIYSWNSLRRRRLAIE</sequence>
<gene>
    <name evidence="1" type="primary">mdtG</name>
    <name type="ordered locus">SPC_2596</name>
</gene>
<organism>
    <name type="scientific">Salmonella paratyphi C (strain RKS4594)</name>
    <dbReference type="NCBI Taxonomy" id="476213"/>
    <lineage>
        <taxon>Bacteria</taxon>
        <taxon>Pseudomonadati</taxon>
        <taxon>Pseudomonadota</taxon>
        <taxon>Gammaproteobacteria</taxon>
        <taxon>Enterobacterales</taxon>
        <taxon>Enterobacteriaceae</taxon>
        <taxon>Salmonella</taxon>
    </lineage>
</organism>
<name>MDTG_SALPC</name>
<feature type="chain" id="PRO_1000185162" description="Multidrug resistance protein MdtG">
    <location>
        <begin position="1"/>
        <end position="404"/>
    </location>
</feature>
<feature type="transmembrane region" description="Helical" evidence="1">
    <location>
        <begin position="19"/>
        <end position="39"/>
    </location>
</feature>
<feature type="transmembrane region" description="Helical" evidence="1">
    <location>
        <begin position="56"/>
        <end position="76"/>
    </location>
</feature>
<feature type="transmembrane region" description="Helical" evidence="1">
    <location>
        <begin position="90"/>
        <end position="110"/>
    </location>
</feature>
<feature type="transmembrane region" description="Helical" evidence="1">
    <location>
        <begin position="113"/>
        <end position="133"/>
    </location>
</feature>
<feature type="transmembrane region" description="Helical" evidence="1">
    <location>
        <begin position="149"/>
        <end position="169"/>
    </location>
</feature>
<feature type="transmembrane region" description="Helical" evidence="1">
    <location>
        <begin position="171"/>
        <end position="191"/>
    </location>
</feature>
<feature type="transmembrane region" description="Helical" evidence="1">
    <location>
        <begin position="222"/>
        <end position="242"/>
    </location>
</feature>
<feature type="transmembrane region" description="Helical" evidence="1">
    <location>
        <begin position="254"/>
        <end position="274"/>
    </location>
</feature>
<feature type="transmembrane region" description="Helical" evidence="1">
    <location>
        <begin position="288"/>
        <end position="308"/>
    </location>
</feature>
<feature type="transmembrane region" description="Helical" evidence="1">
    <location>
        <begin position="317"/>
        <end position="337"/>
    </location>
</feature>
<feature type="transmembrane region" description="Helical" evidence="1">
    <location>
        <begin position="376"/>
        <end position="396"/>
    </location>
</feature>
<accession>C0Q855</accession>
<comment type="subcellular location">
    <subcellularLocation>
        <location evidence="1">Cell inner membrane</location>
        <topology evidence="1">Multi-pass membrane protein</topology>
    </subcellularLocation>
</comment>
<comment type="similarity">
    <text evidence="1">Belongs to the major facilitator superfamily. DHA1 family. MdtG (TC 2.A.1.2.20) subfamily.</text>
</comment>
<protein>
    <recommendedName>
        <fullName evidence="1">Multidrug resistance protein MdtG</fullName>
    </recommendedName>
</protein>
<keyword id="KW-0997">Cell inner membrane</keyword>
<keyword id="KW-1003">Cell membrane</keyword>
<keyword id="KW-0472">Membrane</keyword>
<keyword id="KW-0812">Transmembrane</keyword>
<keyword id="KW-1133">Transmembrane helix</keyword>
<keyword id="KW-0813">Transport</keyword>
<proteinExistence type="inferred from homology"/>
<evidence type="ECO:0000255" key="1">
    <source>
        <dbReference type="HAMAP-Rule" id="MF_01528"/>
    </source>
</evidence>
<dbReference type="EMBL" id="CP000857">
    <property type="protein sequence ID" value="ACN46700.1"/>
    <property type="molecule type" value="Genomic_DNA"/>
</dbReference>
<dbReference type="RefSeq" id="WP_000075059.1">
    <property type="nucleotide sequence ID" value="NC_012125.1"/>
</dbReference>
<dbReference type="SMR" id="C0Q855"/>
<dbReference type="KEGG" id="sei:SPC_2596"/>
<dbReference type="HOGENOM" id="CLU_001265_57_3_6"/>
<dbReference type="Proteomes" id="UP000001599">
    <property type="component" value="Chromosome"/>
</dbReference>
<dbReference type="GO" id="GO:0005886">
    <property type="term" value="C:plasma membrane"/>
    <property type="evidence" value="ECO:0007669"/>
    <property type="project" value="UniProtKB-SubCell"/>
</dbReference>
<dbReference type="GO" id="GO:0022857">
    <property type="term" value="F:transmembrane transporter activity"/>
    <property type="evidence" value="ECO:0007669"/>
    <property type="project" value="UniProtKB-UniRule"/>
</dbReference>
<dbReference type="CDD" id="cd17391">
    <property type="entry name" value="MFS_MdtG_MDR_like"/>
    <property type="match status" value="1"/>
</dbReference>
<dbReference type="FunFam" id="1.20.1250.20:FF:000020">
    <property type="entry name" value="Multidrug resistance protein MdtG"/>
    <property type="match status" value="1"/>
</dbReference>
<dbReference type="FunFam" id="1.20.1250.20:FF:000022">
    <property type="entry name" value="Multidrug resistance protein MdtG"/>
    <property type="match status" value="1"/>
</dbReference>
<dbReference type="Gene3D" id="1.20.1250.20">
    <property type="entry name" value="MFS general substrate transporter like domains"/>
    <property type="match status" value="2"/>
</dbReference>
<dbReference type="HAMAP" id="MF_01528">
    <property type="entry name" value="MFS_MdtG"/>
    <property type="match status" value="1"/>
</dbReference>
<dbReference type="InterPro" id="IPR011701">
    <property type="entry name" value="MFS"/>
</dbReference>
<dbReference type="InterPro" id="IPR020846">
    <property type="entry name" value="MFS_dom"/>
</dbReference>
<dbReference type="InterPro" id="IPR050497">
    <property type="entry name" value="MFS_MdtG_subfamily"/>
</dbReference>
<dbReference type="InterPro" id="IPR005828">
    <property type="entry name" value="MFS_sugar_transport-like"/>
</dbReference>
<dbReference type="InterPro" id="IPR036259">
    <property type="entry name" value="MFS_trans_sf"/>
</dbReference>
<dbReference type="InterPro" id="IPR023692">
    <property type="entry name" value="Mutidrug-R_MdtG"/>
</dbReference>
<dbReference type="InterPro" id="IPR001958">
    <property type="entry name" value="Tet-R_TetA/multi-R_MdtG-like"/>
</dbReference>
<dbReference type="NCBIfam" id="NF007372">
    <property type="entry name" value="PRK09874.1"/>
    <property type="match status" value="1"/>
</dbReference>
<dbReference type="PANTHER" id="PTHR43414">
    <property type="entry name" value="MULTIDRUG RESISTANCE PROTEIN MDTG"/>
    <property type="match status" value="1"/>
</dbReference>
<dbReference type="PANTHER" id="PTHR43414:SF6">
    <property type="entry name" value="MULTIDRUG RESISTANCE PROTEIN MDTG"/>
    <property type="match status" value="1"/>
</dbReference>
<dbReference type="Pfam" id="PF07690">
    <property type="entry name" value="MFS_1"/>
    <property type="match status" value="1"/>
</dbReference>
<dbReference type="Pfam" id="PF00083">
    <property type="entry name" value="Sugar_tr"/>
    <property type="match status" value="1"/>
</dbReference>
<dbReference type="PRINTS" id="PR01035">
    <property type="entry name" value="TCRTETA"/>
</dbReference>
<dbReference type="SUPFAM" id="SSF103473">
    <property type="entry name" value="MFS general substrate transporter"/>
    <property type="match status" value="1"/>
</dbReference>
<dbReference type="PROSITE" id="PS50850">
    <property type="entry name" value="MFS"/>
    <property type="match status" value="1"/>
</dbReference>